<sequence length="66" mass="7005">MAGQEQQSSSPREEEHEVADAPVPVPSSPQASAHTDGVDDLLDEIDGVLESNAEEFVRGFVQKGGQ</sequence>
<proteinExistence type="inferred from homology"/>
<accession>A9WSI2</accession>
<name>PUP_RENSM</name>
<protein>
    <recommendedName>
        <fullName evidence="1">Prokaryotic ubiquitin-like protein Pup</fullName>
    </recommendedName>
    <alternativeName>
        <fullName evidence="1">Bacterial ubiquitin-like modifier</fullName>
    </alternativeName>
</protein>
<feature type="chain" id="PRO_0000390603" description="Prokaryotic ubiquitin-like protein Pup">
    <location>
        <begin position="1"/>
        <end position="66"/>
    </location>
</feature>
<feature type="region of interest" description="Disordered" evidence="2">
    <location>
        <begin position="1"/>
        <end position="39"/>
    </location>
</feature>
<feature type="region of interest" description="ARC ATPase binding" evidence="1">
    <location>
        <begin position="23"/>
        <end position="60"/>
    </location>
</feature>
<feature type="compositionally biased region" description="Low complexity" evidence="2">
    <location>
        <begin position="1"/>
        <end position="10"/>
    </location>
</feature>
<feature type="modified residue" description="Deamidated glutamine" evidence="1">
    <location>
        <position position="66"/>
    </location>
</feature>
<feature type="cross-link" description="Isoglutamyl lysine isopeptide (Gln-Lys) (interchain with K-? in acceptor proteins)" evidence="1">
    <location>
        <position position="66"/>
    </location>
</feature>
<organism>
    <name type="scientific">Renibacterium salmoninarum (strain ATCC 33209 / DSM 20767 / JCM 11484 / NBRC 15589 / NCIMB 2235)</name>
    <dbReference type="NCBI Taxonomy" id="288705"/>
    <lineage>
        <taxon>Bacteria</taxon>
        <taxon>Bacillati</taxon>
        <taxon>Actinomycetota</taxon>
        <taxon>Actinomycetes</taxon>
        <taxon>Micrococcales</taxon>
        <taxon>Micrococcaceae</taxon>
        <taxon>Renibacterium</taxon>
    </lineage>
</organism>
<keyword id="KW-1017">Isopeptide bond</keyword>
<keyword id="KW-1185">Reference proteome</keyword>
<keyword id="KW-0833">Ubl conjugation pathway</keyword>
<dbReference type="EMBL" id="CP000910">
    <property type="protein sequence ID" value="ABY23770.1"/>
    <property type="molecule type" value="Genomic_DNA"/>
</dbReference>
<dbReference type="RefSeq" id="WP_012245440.1">
    <property type="nucleotide sequence ID" value="NC_010168.1"/>
</dbReference>
<dbReference type="SMR" id="A9WSI2"/>
<dbReference type="STRING" id="288705.RSal33209_2037"/>
<dbReference type="KEGG" id="rsa:RSal33209_2037"/>
<dbReference type="eggNOG" id="ENOG50333JS">
    <property type="taxonomic scope" value="Bacteria"/>
</dbReference>
<dbReference type="HOGENOM" id="CLU_183816_2_1_11"/>
<dbReference type="UniPathway" id="UPA00997"/>
<dbReference type="Proteomes" id="UP000002007">
    <property type="component" value="Chromosome"/>
</dbReference>
<dbReference type="GO" id="GO:0070628">
    <property type="term" value="F:proteasome binding"/>
    <property type="evidence" value="ECO:0007669"/>
    <property type="project" value="UniProtKB-UniRule"/>
</dbReference>
<dbReference type="GO" id="GO:0031386">
    <property type="term" value="F:protein tag activity"/>
    <property type="evidence" value="ECO:0007669"/>
    <property type="project" value="UniProtKB-UniRule"/>
</dbReference>
<dbReference type="GO" id="GO:0019941">
    <property type="term" value="P:modification-dependent protein catabolic process"/>
    <property type="evidence" value="ECO:0007669"/>
    <property type="project" value="UniProtKB-UniRule"/>
</dbReference>
<dbReference type="GO" id="GO:0010498">
    <property type="term" value="P:proteasomal protein catabolic process"/>
    <property type="evidence" value="ECO:0007669"/>
    <property type="project" value="UniProtKB-UniRule"/>
</dbReference>
<dbReference type="GO" id="GO:0070490">
    <property type="term" value="P:protein pupylation"/>
    <property type="evidence" value="ECO:0007669"/>
    <property type="project" value="UniProtKB-UniRule"/>
</dbReference>
<dbReference type="HAMAP" id="MF_02106">
    <property type="entry name" value="Pup"/>
    <property type="match status" value="1"/>
</dbReference>
<dbReference type="InterPro" id="IPR008515">
    <property type="entry name" value="Ubiquitin-like_Pup"/>
</dbReference>
<dbReference type="NCBIfam" id="TIGR03687">
    <property type="entry name" value="pupylate_cterm"/>
    <property type="match status" value="1"/>
</dbReference>
<dbReference type="Pfam" id="PF05639">
    <property type="entry name" value="Pup"/>
    <property type="match status" value="1"/>
</dbReference>
<gene>
    <name evidence="1" type="primary">pup</name>
    <name type="ordered locus">RSal33209_2037</name>
</gene>
<reference key="1">
    <citation type="journal article" date="2008" name="J. Bacteriol.">
        <title>Genome sequence of the fish pathogen Renibacterium salmoninarum suggests reductive evolution away from an environmental Arthrobacter ancestor.</title>
        <authorList>
            <person name="Wiens G.D."/>
            <person name="Rockey D.D."/>
            <person name="Wu Z."/>
            <person name="Chang J."/>
            <person name="Levy R."/>
            <person name="Crane S."/>
            <person name="Chen D.S."/>
            <person name="Capri G.R."/>
            <person name="Burnett J.R."/>
            <person name="Sudheesh P.S."/>
            <person name="Schipma M.J."/>
            <person name="Burd H."/>
            <person name="Bhattacharyya A."/>
            <person name="Rhodes L.D."/>
            <person name="Kaul R."/>
            <person name="Strom M.S."/>
        </authorList>
    </citation>
    <scope>NUCLEOTIDE SEQUENCE [LARGE SCALE GENOMIC DNA]</scope>
    <source>
        <strain>ATCC 33209 / DSM 20767 / JCM 11484 / NBRC 15589 / NCIMB 2235</strain>
    </source>
</reference>
<comment type="function">
    <text evidence="1">Protein modifier that is covalently attached to lysine residues of substrate proteins, thereby targeting them for proteasomal degradation. The tagging system is termed pupylation.</text>
</comment>
<comment type="pathway">
    <text evidence="1">Protein degradation; proteasomal Pup-dependent pathway.</text>
</comment>
<comment type="subunit">
    <text evidence="1">Strongly interacts with the proteasome-associated ATPase ARC through a hydrophobic interface; the interacting region of Pup lies in its C-terminal half. There is one Pup binding site per ARC hexamer ring.</text>
</comment>
<comment type="domain">
    <text evidence="1">The N-terminal unstructured half of Pup provides a signal required to initiate unfolding and degradation by the proteasome but is not needed for pupylation, while the C-terminal helical half of Pup interacts with ARC to target proteins to the proteasome.</text>
</comment>
<comment type="PTM">
    <text evidence="1">Is modified by deamidation of its C-terminal glutamine to glutamate by the deamidase Dop, a prerequisite to the subsequent pupylation process.</text>
</comment>
<comment type="similarity">
    <text evidence="1">Belongs to the prokaryotic ubiquitin-like protein family.</text>
</comment>
<evidence type="ECO:0000255" key="1">
    <source>
        <dbReference type="HAMAP-Rule" id="MF_02106"/>
    </source>
</evidence>
<evidence type="ECO:0000256" key="2">
    <source>
        <dbReference type="SAM" id="MobiDB-lite"/>
    </source>
</evidence>